<sequence>MAADPIHQFQITKLFTLGHIGGQEIAFTNSSAYMFLSVGVISLLMIGGMAGRQLVPGRIQSVAELSYEFVAGIIRSTAGKEGMKFFPLVFSLFMFIAVSNLIGIIPYTFTVSSHLIVTVALALLVFVIVLFYGLYKNGLKFFKLFVPSGVPVYILPLVVFIEVISFFLKPVSHSVRLFANMLAGHIALKVFASFVGMLGALGFLGWMGAILPLGLTVAVTALEILVAFLQAYVFTILTCIYLNDAMHPGH</sequence>
<proteinExistence type="inferred from homology"/>
<gene>
    <name evidence="1" type="primary">atpB</name>
    <name type="ordered locus">RPD_0830</name>
</gene>
<protein>
    <recommendedName>
        <fullName evidence="1">ATP synthase subunit a</fullName>
    </recommendedName>
    <alternativeName>
        <fullName evidence="1">ATP synthase F0 sector subunit a</fullName>
    </alternativeName>
    <alternativeName>
        <fullName evidence="1">F-ATPase subunit 6</fullName>
    </alternativeName>
</protein>
<name>ATP6_RHOPS</name>
<comment type="function">
    <text evidence="1">Key component of the proton channel; it plays a direct role in the translocation of protons across the membrane.</text>
</comment>
<comment type="subunit">
    <text evidence="1">F-type ATPases have 2 components, CF(1) - the catalytic core - and CF(0) - the membrane proton channel. CF(1) has five subunits: alpha(3), beta(3), gamma(1), delta(1), epsilon(1). CF(0) has four main subunits: a, b, b' and c.</text>
</comment>
<comment type="subcellular location">
    <subcellularLocation>
        <location evidence="1">Cell inner membrane</location>
        <topology evidence="1">Multi-pass membrane protein</topology>
    </subcellularLocation>
</comment>
<comment type="similarity">
    <text evidence="1">Belongs to the ATPase A chain family.</text>
</comment>
<organism>
    <name type="scientific">Rhodopseudomonas palustris (strain BisB5)</name>
    <dbReference type="NCBI Taxonomy" id="316057"/>
    <lineage>
        <taxon>Bacteria</taxon>
        <taxon>Pseudomonadati</taxon>
        <taxon>Pseudomonadota</taxon>
        <taxon>Alphaproteobacteria</taxon>
        <taxon>Hyphomicrobiales</taxon>
        <taxon>Nitrobacteraceae</taxon>
        <taxon>Rhodopseudomonas</taxon>
    </lineage>
</organism>
<keyword id="KW-0066">ATP synthesis</keyword>
<keyword id="KW-0997">Cell inner membrane</keyword>
<keyword id="KW-1003">Cell membrane</keyword>
<keyword id="KW-0138">CF(0)</keyword>
<keyword id="KW-0375">Hydrogen ion transport</keyword>
<keyword id="KW-0406">Ion transport</keyword>
<keyword id="KW-0472">Membrane</keyword>
<keyword id="KW-0812">Transmembrane</keyword>
<keyword id="KW-1133">Transmembrane helix</keyword>
<keyword id="KW-0813">Transport</keyword>
<dbReference type="EMBL" id="CP000283">
    <property type="protein sequence ID" value="ABE38068.1"/>
    <property type="molecule type" value="Genomic_DNA"/>
</dbReference>
<dbReference type="SMR" id="Q13CX1"/>
<dbReference type="STRING" id="316057.RPD_0830"/>
<dbReference type="KEGG" id="rpd:RPD_0830"/>
<dbReference type="eggNOG" id="COG0356">
    <property type="taxonomic scope" value="Bacteria"/>
</dbReference>
<dbReference type="HOGENOM" id="CLU_041018_0_2_5"/>
<dbReference type="BioCyc" id="RPAL316057:RPD_RS04230-MONOMER"/>
<dbReference type="Proteomes" id="UP000001818">
    <property type="component" value="Chromosome"/>
</dbReference>
<dbReference type="GO" id="GO:0005886">
    <property type="term" value="C:plasma membrane"/>
    <property type="evidence" value="ECO:0007669"/>
    <property type="project" value="UniProtKB-SubCell"/>
</dbReference>
<dbReference type="GO" id="GO:0045259">
    <property type="term" value="C:proton-transporting ATP synthase complex"/>
    <property type="evidence" value="ECO:0007669"/>
    <property type="project" value="UniProtKB-KW"/>
</dbReference>
<dbReference type="GO" id="GO:0046933">
    <property type="term" value="F:proton-transporting ATP synthase activity, rotational mechanism"/>
    <property type="evidence" value="ECO:0007669"/>
    <property type="project" value="UniProtKB-UniRule"/>
</dbReference>
<dbReference type="CDD" id="cd00310">
    <property type="entry name" value="ATP-synt_Fo_a_6"/>
    <property type="match status" value="1"/>
</dbReference>
<dbReference type="FunFam" id="1.20.120.220:FF:000003">
    <property type="entry name" value="ATP synthase subunit a"/>
    <property type="match status" value="1"/>
</dbReference>
<dbReference type="Gene3D" id="1.20.120.220">
    <property type="entry name" value="ATP synthase, F0 complex, subunit A"/>
    <property type="match status" value="1"/>
</dbReference>
<dbReference type="HAMAP" id="MF_01393">
    <property type="entry name" value="ATP_synth_a_bact"/>
    <property type="match status" value="1"/>
</dbReference>
<dbReference type="InterPro" id="IPR000568">
    <property type="entry name" value="ATP_synth_F0_asu"/>
</dbReference>
<dbReference type="InterPro" id="IPR023011">
    <property type="entry name" value="ATP_synth_F0_asu_AS"/>
</dbReference>
<dbReference type="InterPro" id="IPR045083">
    <property type="entry name" value="ATP_synth_F0_asu_bact/mt"/>
</dbReference>
<dbReference type="InterPro" id="IPR035908">
    <property type="entry name" value="F0_ATP_A_sf"/>
</dbReference>
<dbReference type="NCBIfam" id="TIGR01131">
    <property type="entry name" value="ATP_synt_6_or_A"/>
    <property type="match status" value="1"/>
</dbReference>
<dbReference type="NCBIfam" id="NF004482">
    <property type="entry name" value="PRK05815.2-4"/>
    <property type="match status" value="1"/>
</dbReference>
<dbReference type="PANTHER" id="PTHR11410">
    <property type="entry name" value="ATP SYNTHASE SUBUNIT A"/>
    <property type="match status" value="1"/>
</dbReference>
<dbReference type="PANTHER" id="PTHR11410:SF0">
    <property type="entry name" value="ATP SYNTHASE SUBUNIT A"/>
    <property type="match status" value="1"/>
</dbReference>
<dbReference type="Pfam" id="PF00119">
    <property type="entry name" value="ATP-synt_A"/>
    <property type="match status" value="1"/>
</dbReference>
<dbReference type="PRINTS" id="PR00123">
    <property type="entry name" value="ATPASEA"/>
</dbReference>
<dbReference type="SUPFAM" id="SSF81336">
    <property type="entry name" value="F1F0 ATP synthase subunit A"/>
    <property type="match status" value="1"/>
</dbReference>
<dbReference type="PROSITE" id="PS00449">
    <property type="entry name" value="ATPASE_A"/>
    <property type="match status" value="1"/>
</dbReference>
<reference key="1">
    <citation type="submission" date="2006-03" db="EMBL/GenBank/DDBJ databases">
        <title>Complete sequence of Rhodopseudomonas palustris BisB5.</title>
        <authorList>
            <consortium name="US DOE Joint Genome Institute"/>
            <person name="Copeland A."/>
            <person name="Lucas S."/>
            <person name="Lapidus A."/>
            <person name="Barry K."/>
            <person name="Detter J.C."/>
            <person name="Glavina del Rio T."/>
            <person name="Hammon N."/>
            <person name="Israni S."/>
            <person name="Dalin E."/>
            <person name="Tice H."/>
            <person name="Pitluck S."/>
            <person name="Chain P."/>
            <person name="Malfatti S."/>
            <person name="Shin M."/>
            <person name="Vergez L."/>
            <person name="Schmutz J."/>
            <person name="Larimer F."/>
            <person name="Land M."/>
            <person name="Hauser L."/>
            <person name="Pelletier D.A."/>
            <person name="Kyrpides N."/>
            <person name="Lykidis A."/>
            <person name="Oda Y."/>
            <person name="Harwood C.S."/>
            <person name="Richardson P."/>
        </authorList>
    </citation>
    <scope>NUCLEOTIDE SEQUENCE [LARGE SCALE GENOMIC DNA]</scope>
    <source>
        <strain>BisB5</strain>
    </source>
</reference>
<accession>Q13CX1</accession>
<evidence type="ECO:0000255" key="1">
    <source>
        <dbReference type="HAMAP-Rule" id="MF_01393"/>
    </source>
</evidence>
<feature type="chain" id="PRO_1000145302" description="ATP synthase subunit a">
    <location>
        <begin position="1"/>
        <end position="250"/>
    </location>
</feature>
<feature type="transmembrane region" description="Helical" evidence="1">
    <location>
        <begin position="31"/>
        <end position="51"/>
    </location>
</feature>
<feature type="transmembrane region" description="Helical" evidence="1">
    <location>
        <begin position="85"/>
        <end position="105"/>
    </location>
</feature>
<feature type="transmembrane region" description="Helical" evidence="1">
    <location>
        <begin position="115"/>
        <end position="135"/>
    </location>
</feature>
<feature type="transmembrane region" description="Helical" evidence="1">
    <location>
        <begin position="144"/>
        <end position="164"/>
    </location>
</feature>
<feature type="transmembrane region" description="Helical" evidence="1">
    <location>
        <begin position="194"/>
        <end position="214"/>
    </location>
</feature>
<feature type="transmembrane region" description="Helical" evidence="1">
    <location>
        <begin position="217"/>
        <end position="237"/>
    </location>
</feature>